<organism>
    <name type="scientific">Helicobacter pylori (strain Shi470)</name>
    <dbReference type="NCBI Taxonomy" id="512562"/>
    <lineage>
        <taxon>Bacteria</taxon>
        <taxon>Pseudomonadati</taxon>
        <taxon>Campylobacterota</taxon>
        <taxon>Epsilonproteobacteria</taxon>
        <taxon>Campylobacterales</taxon>
        <taxon>Helicobacteraceae</taxon>
        <taxon>Helicobacter</taxon>
    </lineage>
</organism>
<keyword id="KW-0687">Ribonucleoprotein</keyword>
<keyword id="KW-0689">Ribosomal protein</keyword>
<evidence type="ECO:0000255" key="1">
    <source>
        <dbReference type="HAMAP-Rule" id="MF_00508"/>
    </source>
</evidence>
<evidence type="ECO:0000305" key="2"/>
<name>RS10_HELPS</name>
<reference key="1">
    <citation type="submission" date="2008-05" db="EMBL/GenBank/DDBJ databases">
        <title>Genome sequence of Helicobacter pylori from the remote Amazon: traces of Asian ancestry of the first Americans.</title>
        <authorList>
            <person name="Kersulyte D."/>
            <person name="Kalia A."/>
            <person name="Gilman R.H."/>
            <person name="Berg D.E."/>
        </authorList>
    </citation>
    <scope>NUCLEOTIDE SEQUENCE [LARGE SCALE GENOMIC DNA]</scope>
    <source>
        <strain>Shi470</strain>
    </source>
</reference>
<sequence length="104" mass="11918">MEKIRLKLKAYDHRVLDRSVVAIVEAVKRSGSEIRGPIPLPTKNKRYTVLRSPHVNKDSREQFEIRVYSRLIDIISATPETVDSLMKLDLAPEVDVEVTSMETK</sequence>
<gene>
    <name evidence="1" type="primary">rpsJ</name>
    <name type="ordered locus">HPSH_06825</name>
</gene>
<proteinExistence type="inferred from homology"/>
<dbReference type="EMBL" id="CP001072">
    <property type="protein sequence ID" value="ACD48765.1"/>
    <property type="molecule type" value="Genomic_DNA"/>
</dbReference>
<dbReference type="RefSeq" id="WP_000411561.1">
    <property type="nucleotide sequence ID" value="NC_010698.2"/>
</dbReference>
<dbReference type="SMR" id="B2UV83"/>
<dbReference type="GeneID" id="93237549"/>
<dbReference type="KEGG" id="hps:HPSH_06825"/>
<dbReference type="HOGENOM" id="CLU_122625_1_3_7"/>
<dbReference type="GO" id="GO:1990904">
    <property type="term" value="C:ribonucleoprotein complex"/>
    <property type="evidence" value="ECO:0007669"/>
    <property type="project" value="UniProtKB-KW"/>
</dbReference>
<dbReference type="GO" id="GO:0005840">
    <property type="term" value="C:ribosome"/>
    <property type="evidence" value="ECO:0007669"/>
    <property type="project" value="UniProtKB-KW"/>
</dbReference>
<dbReference type="GO" id="GO:0003735">
    <property type="term" value="F:structural constituent of ribosome"/>
    <property type="evidence" value="ECO:0007669"/>
    <property type="project" value="InterPro"/>
</dbReference>
<dbReference type="GO" id="GO:0000049">
    <property type="term" value="F:tRNA binding"/>
    <property type="evidence" value="ECO:0007669"/>
    <property type="project" value="UniProtKB-UniRule"/>
</dbReference>
<dbReference type="GO" id="GO:0006412">
    <property type="term" value="P:translation"/>
    <property type="evidence" value="ECO:0007669"/>
    <property type="project" value="UniProtKB-UniRule"/>
</dbReference>
<dbReference type="FunFam" id="3.30.70.600:FF:000003">
    <property type="entry name" value="30S ribosomal protein S10"/>
    <property type="match status" value="1"/>
</dbReference>
<dbReference type="Gene3D" id="3.30.70.600">
    <property type="entry name" value="Ribosomal protein S10 domain"/>
    <property type="match status" value="1"/>
</dbReference>
<dbReference type="HAMAP" id="MF_00508">
    <property type="entry name" value="Ribosomal_uS10"/>
    <property type="match status" value="1"/>
</dbReference>
<dbReference type="InterPro" id="IPR001848">
    <property type="entry name" value="Ribosomal_uS10"/>
</dbReference>
<dbReference type="InterPro" id="IPR018268">
    <property type="entry name" value="Ribosomal_uS10_CS"/>
</dbReference>
<dbReference type="InterPro" id="IPR027486">
    <property type="entry name" value="Ribosomal_uS10_dom"/>
</dbReference>
<dbReference type="InterPro" id="IPR036838">
    <property type="entry name" value="Ribosomal_uS10_dom_sf"/>
</dbReference>
<dbReference type="NCBIfam" id="NF001861">
    <property type="entry name" value="PRK00596.1"/>
    <property type="match status" value="1"/>
</dbReference>
<dbReference type="NCBIfam" id="TIGR01049">
    <property type="entry name" value="rpsJ_bact"/>
    <property type="match status" value="1"/>
</dbReference>
<dbReference type="PANTHER" id="PTHR11700">
    <property type="entry name" value="30S RIBOSOMAL PROTEIN S10 FAMILY MEMBER"/>
    <property type="match status" value="1"/>
</dbReference>
<dbReference type="Pfam" id="PF00338">
    <property type="entry name" value="Ribosomal_S10"/>
    <property type="match status" value="1"/>
</dbReference>
<dbReference type="PRINTS" id="PR00971">
    <property type="entry name" value="RIBOSOMALS10"/>
</dbReference>
<dbReference type="SMART" id="SM01403">
    <property type="entry name" value="Ribosomal_S10"/>
    <property type="match status" value="1"/>
</dbReference>
<dbReference type="SUPFAM" id="SSF54999">
    <property type="entry name" value="Ribosomal protein S10"/>
    <property type="match status" value="1"/>
</dbReference>
<dbReference type="PROSITE" id="PS00361">
    <property type="entry name" value="RIBOSOMAL_S10"/>
    <property type="match status" value="1"/>
</dbReference>
<protein>
    <recommendedName>
        <fullName evidence="1">Small ribosomal subunit protein uS10</fullName>
    </recommendedName>
    <alternativeName>
        <fullName evidence="2">30S ribosomal protein S10</fullName>
    </alternativeName>
</protein>
<accession>B2UV83</accession>
<comment type="function">
    <text evidence="1">Involved in the binding of tRNA to the ribosomes.</text>
</comment>
<comment type="subunit">
    <text evidence="1">Part of the 30S ribosomal subunit.</text>
</comment>
<comment type="similarity">
    <text evidence="1">Belongs to the universal ribosomal protein uS10 family.</text>
</comment>
<feature type="chain" id="PRO_1000127136" description="Small ribosomal subunit protein uS10">
    <location>
        <begin position="1"/>
        <end position="104"/>
    </location>
</feature>